<reference key="1">
    <citation type="journal article" date="2002" name="Gene Expr. Patterns">
        <title>Sexually dimorphic gene expression in the developing mouse gonad.</title>
        <authorList>
            <person name="Menke D.B."/>
            <person name="Page D.C."/>
        </authorList>
    </citation>
    <scope>NUCLEOTIDE SEQUENCE [MRNA]</scope>
    <scope>DEVELOPMENTAL STAGE</scope>
    <source>
        <strain>C57BL/6J</strain>
        <tissue>Testis</tissue>
    </source>
</reference>
<reference key="2">
    <citation type="journal article" date="2003" name="Dev. Biol.">
        <title>Identification of a secreted BMP antagonist, ectodin, integrating BMP, FGF, and SHH signals from the tooth enamel knot.</title>
        <authorList>
            <person name="Laurikkala J."/>
            <person name="Kassai Y."/>
            <person name="Pakkasjaervi L."/>
            <person name="Thesleff I."/>
            <person name="Itoh N."/>
        </authorList>
    </citation>
    <scope>NUCLEOTIDE SEQUENCE [MRNA]</scope>
    <scope>FUNCTION</scope>
    <scope>INTERACTION WITH BMP2; BMP4; BMP6 AND BMP7</scope>
    <scope>SUBCELLULAR LOCATION</scope>
    <scope>TISSUE SPECIFICITY</scope>
    <scope>DEVELOPMENTAL STAGE</scope>
    <scope>INDUCTION</scope>
</reference>
<reference key="3">
    <citation type="submission" date="2003-03" db="EMBL/GenBank/DDBJ databases">
        <title>A novel secreted WNT agonist is a requirement for epithelial-mesenchymal interactions.</title>
        <authorList>
            <person name="O'Shaughnessy R.F.L."/>
            <person name="Yeo W."/>
            <person name="Gautier J."/>
            <person name="Jahoda C.A.B."/>
            <person name="Christiano A.M."/>
        </authorList>
    </citation>
    <scope>NUCLEOTIDE SEQUENCE [MRNA]</scope>
    <source>
        <strain>C57BL/6J</strain>
    </source>
</reference>
<reference key="4">
    <citation type="journal article" date="2005" name="Science">
        <title>The transcriptional landscape of the mammalian genome.</title>
        <authorList>
            <person name="Carninci P."/>
            <person name="Kasukawa T."/>
            <person name="Katayama S."/>
            <person name="Gough J."/>
            <person name="Frith M.C."/>
            <person name="Maeda N."/>
            <person name="Oyama R."/>
            <person name="Ravasi T."/>
            <person name="Lenhard B."/>
            <person name="Wells C."/>
            <person name="Kodzius R."/>
            <person name="Shimokawa K."/>
            <person name="Bajic V.B."/>
            <person name="Brenner S.E."/>
            <person name="Batalov S."/>
            <person name="Forrest A.R."/>
            <person name="Zavolan M."/>
            <person name="Davis M.J."/>
            <person name="Wilming L.G."/>
            <person name="Aidinis V."/>
            <person name="Allen J.E."/>
            <person name="Ambesi-Impiombato A."/>
            <person name="Apweiler R."/>
            <person name="Aturaliya R.N."/>
            <person name="Bailey T.L."/>
            <person name="Bansal M."/>
            <person name="Baxter L."/>
            <person name="Beisel K.W."/>
            <person name="Bersano T."/>
            <person name="Bono H."/>
            <person name="Chalk A.M."/>
            <person name="Chiu K.P."/>
            <person name="Choudhary V."/>
            <person name="Christoffels A."/>
            <person name="Clutterbuck D.R."/>
            <person name="Crowe M.L."/>
            <person name="Dalla E."/>
            <person name="Dalrymple B.P."/>
            <person name="de Bono B."/>
            <person name="Della Gatta G."/>
            <person name="di Bernardo D."/>
            <person name="Down T."/>
            <person name="Engstrom P."/>
            <person name="Fagiolini M."/>
            <person name="Faulkner G."/>
            <person name="Fletcher C.F."/>
            <person name="Fukushima T."/>
            <person name="Furuno M."/>
            <person name="Futaki S."/>
            <person name="Gariboldi M."/>
            <person name="Georgii-Hemming P."/>
            <person name="Gingeras T.R."/>
            <person name="Gojobori T."/>
            <person name="Green R.E."/>
            <person name="Gustincich S."/>
            <person name="Harbers M."/>
            <person name="Hayashi Y."/>
            <person name="Hensch T.K."/>
            <person name="Hirokawa N."/>
            <person name="Hill D."/>
            <person name="Huminiecki L."/>
            <person name="Iacono M."/>
            <person name="Ikeo K."/>
            <person name="Iwama A."/>
            <person name="Ishikawa T."/>
            <person name="Jakt M."/>
            <person name="Kanapin A."/>
            <person name="Katoh M."/>
            <person name="Kawasawa Y."/>
            <person name="Kelso J."/>
            <person name="Kitamura H."/>
            <person name="Kitano H."/>
            <person name="Kollias G."/>
            <person name="Krishnan S.P."/>
            <person name="Kruger A."/>
            <person name="Kummerfeld S.K."/>
            <person name="Kurochkin I.V."/>
            <person name="Lareau L.F."/>
            <person name="Lazarevic D."/>
            <person name="Lipovich L."/>
            <person name="Liu J."/>
            <person name="Liuni S."/>
            <person name="McWilliam S."/>
            <person name="Madan Babu M."/>
            <person name="Madera M."/>
            <person name="Marchionni L."/>
            <person name="Matsuda H."/>
            <person name="Matsuzawa S."/>
            <person name="Miki H."/>
            <person name="Mignone F."/>
            <person name="Miyake S."/>
            <person name="Morris K."/>
            <person name="Mottagui-Tabar S."/>
            <person name="Mulder N."/>
            <person name="Nakano N."/>
            <person name="Nakauchi H."/>
            <person name="Ng P."/>
            <person name="Nilsson R."/>
            <person name="Nishiguchi S."/>
            <person name="Nishikawa S."/>
            <person name="Nori F."/>
            <person name="Ohara O."/>
            <person name="Okazaki Y."/>
            <person name="Orlando V."/>
            <person name="Pang K.C."/>
            <person name="Pavan W.J."/>
            <person name="Pavesi G."/>
            <person name="Pesole G."/>
            <person name="Petrovsky N."/>
            <person name="Piazza S."/>
            <person name="Reed J."/>
            <person name="Reid J.F."/>
            <person name="Ring B.Z."/>
            <person name="Ringwald M."/>
            <person name="Rost B."/>
            <person name="Ruan Y."/>
            <person name="Salzberg S.L."/>
            <person name="Sandelin A."/>
            <person name="Schneider C."/>
            <person name="Schoenbach C."/>
            <person name="Sekiguchi K."/>
            <person name="Semple C.A."/>
            <person name="Seno S."/>
            <person name="Sessa L."/>
            <person name="Sheng Y."/>
            <person name="Shibata Y."/>
            <person name="Shimada H."/>
            <person name="Shimada K."/>
            <person name="Silva D."/>
            <person name="Sinclair B."/>
            <person name="Sperling S."/>
            <person name="Stupka E."/>
            <person name="Sugiura K."/>
            <person name="Sultana R."/>
            <person name="Takenaka Y."/>
            <person name="Taki K."/>
            <person name="Tammoja K."/>
            <person name="Tan S.L."/>
            <person name="Tang S."/>
            <person name="Taylor M.S."/>
            <person name="Tegner J."/>
            <person name="Teichmann S.A."/>
            <person name="Ueda H.R."/>
            <person name="van Nimwegen E."/>
            <person name="Verardo R."/>
            <person name="Wei C.L."/>
            <person name="Yagi K."/>
            <person name="Yamanishi H."/>
            <person name="Zabarovsky E."/>
            <person name="Zhu S."/>
            <person name="Zimmer A."/>
            <person name="Hide W."/>
            <person name="Bult C."/>
            <person name="Grimmond S.M."/>
            <person name="Teasdale R.D."/>
            <person name="Liu E.T."/>
            <person name="Brusic V."/>
            <person name="Quackenbush J."/>
            <person name="Wahlestedt C."/>
            <person name="Mattick J.S."/>
            <person name="Hume D.A."/>
            <person name="Kai C."/>
            <person name="Sasaki D."/>
            <person name="Tomaru Y."/>
            <person name="Fukuda S."/>
            <person name="Kanamori-Katayama M."/>
            <person name="Suzuki M."/>
            <person name="Aoki J."/>
            <person name="Arakawa T."/>
            <person name="Iida J."/>
            <person name="Imamura K."/>
            <person name="Itoh M."/>
            <person name="Kato T."/>
            <person name="Kawaji H."/>
            <person name="Kawagashira N."/>
            <person name="Kawashima T."/>
            <person name="Kojima M."/>
            <person name="Kondo S."/>
            <person name="Konno H."/>
            <person name="Nakano K."/>
            <person name="Ninomiya N."/>
            <person name="Nishio T."/>
            <person name="Okada M."/>
            <person name="Plessy C."/>
            <person name="Shibata K."/>
            <person name="Shiraki T."/>
            <person name="Suzuki S."/>
            <person name="Tagami M."/>
            <person name="Waki K."/>
            <person name="Watahiki A."/>
            <person name="Okamura-Oho Y."/>
            <person name="Suzuki H."/>
            <person name="Kawai J."/>
            <person name="Hayashizaki Y."/>
        </authorList>
    </citation>
    <scope>NUCLEOTIDE SEQUENCE [LARGE SCALE MRNA]</scope>
    <source>
        <strain>C57BL/6J</strain>
        <tissue>Kidney</tissue>
        <tissue>Pancreas</tissue>
    </source>
</reference>
<reference key="5">
    <citation type="journal article" date="2004" name="Genome Res.">
        <title>The status, quality, and expansion of the NIH full-length cDNA project: the Mammalian Gene Collection (MGC).</title>
        <authorList>
            <consortium name="The MGC Project Team"/>
        </authorList>
    </citation>
    <scope>NUCLEOTIDE SEQUENCE [LARGE SCALE MRNA]</scope>
    <source>
        <strain>FVB/N</strain>
        <tissue>Kidney</tissue>
    </source>
</reference>
<reference key="6">
    <citation type="journal article" date="2004" name="Biochem. Biophys. Res. Commun.">
        <title>USAG-1: a bone morphogenetic protein antagonist abundantly expressed in the kidney.</title>
        <authorList>
            <person name="Yanagita M."/>
            <person name="Oka M."/>
            <person name="Watabe T."/>
            <person name="Iguchi H."/>
            <person name="Niida A."/>
            <person name="Takahashi S."/>
            <person name="Akiyama T."/>
            <person name="Miyazono K."/>
            <person name="Yanagisawa M."/>
            <person name="Sakurai T."/>
        </authorList>
    </citation>
    <scope>TISSUE SPECIFICITY</scope>
    <scope>DEVELOPMENTAL STAGE</scope>
</reference>
<evidence type="ECO:0000250" key="1"/>
<evidence type="ECO:0000255" key="2"/>
<evidence type="ECO:0000255" key="3">
    <source>
        <dbReference type="PROSITE-ProRule" id="PRU00039"/>
    </source>
</evidence>
<evidence type="ECO:0000256" key="4">
    <source>
        <dbReference type="SAM" id="MobiDB-lite"/>
    </source>
</evidence>
<evidence type="ECO:0000269" key="5">
    <source>
    </source>
</evidence>
<evidence type="ECO:0000269" key="6">
    <source>
    </source>
</evidence>
<evidence type="ECO:0000269" key="7">
    <source>
    </source>
</evidence>
<evidence type="ECO:0000305" key="8"/>
<keyword id="KW-1015">Disulfide bond</keyword>
<keyword id="KW-0325">Glycoprotein</keyword>
<keyword id="KW-1185">Reference proteome</keyword>
<keyword id="KW-0964">Secreted</keyword>
<keyword id="KW-0732">Signal</keyword>
<keyword id="KW-0879">Wnt signaling pathway</keyword>
<accession>Q9CQN4</accession>
<accession>Q8CF09</accession>
<feature type="signal peptide" evidence="1">
    <location>
        <begin position="1"/>
        <end position="23"/>
    </location>
</feature>
<feature type="chain" id="PRO_0000033181" description="Sclerostin domain-containing protein 1">
    <location>
        <begin position="24"/>
        <end position="206"/>
    </location>
</feature>
<feature type="domain" description="CTCK" evidence="3">
    <location>
        <begin position="75"/>
        <end position="170"/>
    </location>
</feature>
<feature type="region of interest" description="Disordered" evidence="4">
    <location>
        <begin position="42"/>
        <end position="62"/>
    </location>
</feature>
<feature type="region of interest" description="Disordered" evidence="4">
    <location>
        <begin position="176"/>
        <end position="206"/>
    </location>
</feature>
<feature type="compositionally biased region" description="Polar residues" evidence="4">
    <location>
        <begin position="44"/>
        <end position="62"/>
    </location>
</feature>
<feature type="compositionally biased region" description="Basic residues" evidence="4">
    <location>
        <begin position="188"/>
        <end position="206"/>
    </location>
</feature>
<feature type="glycosylation site" description="N-linked (GlcNAc...) asparagine" evidence="2">
    <location>
        <position position="47"/>
    </location>
</feature>
<feature type="glycosylation site" description="N-linked (GlcNAc...) asparagine" evidence="2">
    <location>
        <position position="173"/>
    </location>
</feature>
<feature type="disulfide bond" evidence="3">
    <location>
        <begin position="75"/>
        <end position="133"/>
    </location>
</feature>
<feature type="disulfide bond" evidence="3">
    <location>
        <begin position="89"/>
        <end position="147"/>
    </location>
</feature>
<feature type="disulfide bond" evidence="3">
    <location>
        <begin position="100"/>
        <end position="163"/>
    </location>
</feature>
<feature type="disulfide bond" evidence="3">
    <location>
        <begin position="104"/>
        <end position="165"/>
    </location>
</feature>
<feature type="sequence conflict" description="In Ref. 4; BAC25193." evidence="8" ref="4">
    <original>S</original>
    <variation>R</variation>
    <location>
        <position position="69"/>
    </location>
</feature>
<feature type="sequence conflict" description="In Ref. 4; BAC25193." evidence="8" ref="4">
    <original>S</original>
    <variation>T</variation>
    <location>
        <position position="80"/>
    </location>
</feature>
<gene>
    <name type="primary">Sostdc1</name>
    <name type="synonym">Sostl</name>
    <name type="synonym">Usag1</name>
</gene>
<protein>
    <recommendedName>
        <fullName>Sclerostin domain-containing protein 1</fullName>
    </recommendedName>
    <alternativeName>
        <fullName>Ectodermal BMP inhibitor</fullName>
        <shortName>Ectodin</shortName>
    </alternativeName>
    <alternativeName>
        <fullName>Sclerostin-like protein</fullName>
    </alternativeName>
    <alternativeName>
        <fullName>Uterine sensitization-associated gene 1 protein</fullName>
        <shortName>USAG-1</shortName>
    </alternativeName>
</protein>
<dbReference type="EMBL" id="AY134666">
    <property type="protein sequence ID" value="AAN08617.1"/>
    <property type="molecule type" value="mRNA"/>
</dbReference>
<dbReference type="EMBL" id="AB059271">
    <property type="protein sequence ID" value="BAC20332.1"/>
    <property type="molecule type" value="mRNA"/>
</dbReference>
<dbReference type="EMBL" id="AY255635">
    <property type="protein sequence ID" value="AAQ83297.1"/>
    <property type="molecule type" value="mRNA"/>
</dbReference>
<dbReference type="EMBL" id="AK002240">
    <property type="protein sequence ID" value="BAB21957.1"/>
    <property type="molecule type" value="mRNA"/>
</dbReference>
<dbReference type="EMBL" id="AK002396">
    <property type="protein sequence ID" value="BAB22068.1"/>
    <property type="molecule type" value="mRNA"/>
</dbReference>
<dbReference type="EMBL" id="AK007893">
    <property type="protein sequence ID" value="BAB25333.1"/>
    <property type="molecule type" value="mRNA"/>
</dbReference>
<dbReference type="EMBL" id="AK007935">
    <property type="protein sequence ID" value="BAC25193.1"/>
    <property type="molecule type" value="mRNA"/>
</dbReference>
<dbReference type="EMBL" id="AK007967">
    <property type="protein sequence ID" value="BAB25378.1"/>
    <property type="molecule type" value="mRNA"/>
</dbReference>
<dbReference type="EMBL" id="BC021458">
    <property type="protein sequence ID" value="AAH21458.1"/>
    <property type="molecule type" value="mRNA"/>
</dbReference>
<dbReference type="CCDS" id="CCDS25887.1"/>
<dbReference type="RefSeq" id="NP_079588.1">
    <property type="nucleotide sequence ID" value="NM_025312.3"/>
</dbReference>
<dbReference type="SMR" id="Q9CQN4"/>
<dbReference type="FunCoup" id="Q9CQN4">
    <property type="interactions" value="493"/>
</dbReference>
<dbReference type="STRING" id="10090.ENSMUSP00000040230"/>
<dbReference type="GlyCosmos" id="Q9CQN4">
    <property type="glycosylation" value="2 sites, No reported glycans"/>
</dbReference>
<dbReference type="GlyGen" id="Q9CQN4">
    <property type="glycosylation" value="2 sites"/>
</dbReference>
<dbReference type="PhosphoSitePlus" id="Q9CQN4"/>
<dbReference type="PaxDb" id="10090-ENSMUSP00000040230"/>
<dbReference type="ProteomicsDB" id="261113"/>
<dbReference type="Antibodypedia" id="56432">
    <property type="antibodies" value="161 antibodies from 20 providers"/>
</dbReference>
<dbReference type="DNASU" id="66042"/>
<dbReference type="Ensembl" id="ENSMUST00000041407.7">
    <property type="protein sequence ID" value="ENSMUSP00000040230.6"/>
    <property type="gene ID" value="ENSMUSG00000036169.7"/>
</dbReference>
<dbReference type="GeneID" id="66042"/>
<dbReference type="KEGG" id="mmu:66042"/>
<dbReference type="UCSC" id="uc007njx.2">
    <property type="organism name" value="mouse"/>
</dbReference>
<dbReference type="AGR" id="MGI:1913292"/>
<dbReference type="CTD" id="25928"/>
<dbReference type="MGI" id="MGI:1913292">
    <property type="gene designation" value="Sostdc1"/>
</dbReference>
<dbReference type="VEuPathDB" id="HostDB:ENSMUSG00000036169"/>
<dbReference type="eggNOG" id="ENOG502QV5G">
    <property type="taxonomic scope" value="Eukaryota"/>
</dbReference>
<dbReference type="GeneTree" id="ENSGT00390000014900"/>
<dbReference type="HOGENOM" id="CLU_087969_0_0_1"/>
<dbReference type="InParanoid" id="Q9CQN4"/>
<dbReference type="OMA" id="ACIFTKS"/>
<dbReference type="OrthoDB" id="6624188at2759"/>
<dbReference type="PhylomeDB" id="Q9CQN4"/>
<dbReference type="TreeFam" id="TF353019"/>
<dbReference type="BioGRID-ORCS" id="66042">
    <property type="hits" value="1 hit in 77 CRISPR screens"/>
</dbReference>
<dbReference type="ChiTaRS" id="Sostdc1">
    <property type="organism name" value="mouse"/>
</dbReference>
<dbReference type="PRO" id="PR:Q9CQN4"/>
<dbReference type="Proteomes" id="UP000000589">
    <property type="component" value="Chromosome 12"/>
</dbReference>
<dbReference type="RNAct" id="Q9CQN4">
    <property type="molecule type" value="protein"/>
</dbReference>
<dbReference type="Bgee" id="ENSMUSG00000036169">
    <property type="expression patterns" value="Expressed in choroid plexus epithelium and 227 other cell types or tissues"/>
</dbReference>
<dbReference type="GO" id="GO:0005615">
    <property type="term" value="C:extracellular space"/>
    <property type="evidence" value="ECO:0000314"/>
    <property type="project" value="MGI"/>
</dbReference>
<dbReference type="GO" id="GO:0036122">
    <property type="term" value="F:BMP binding"/>
    <property type="evidence" value="ECO:0007669"/>
    <property type="project" value="Ensembl"/>
</dbReference>
<dbReference type="GO" id="GO:0098821">
    <property type="term" value="F:BMP receptor activity"/>
    <property type="evidence" value="ECO:0007669"/>
    <property type="project" value="Ensembl"/>
</dbReference>
<dbReference type="GO" id="GO:0030509">
    <property type="term" value="P:BMP signaling pathway"/>
    <property type="evidence" value="ECO:0000314"/>
    <property type="project" value="MGI"/>
</dbReference>
<dbReference type="GO" id="GO:0060070">
    <property type="term" value="P:canonical Wnt signaling pathway"/>
    <property type="evidence" value="ECO:0000315"/>
    <property type="project" value="MGI"/>
</dbReference>
<dbReference type="GO" id="GO:0045165">
    <property type="term" value="P:cell fate commitment"/>
    <property type="evidence" value="ECO:0000315"/>
    <property type="project" value="MGI"/>
</dbReference>
<dbReference type="GO" id="GO:0072148">
    <property type="term" value="P:epithelial cell fate commitment"/>
    <property type="evidence" value="ECO:0000315"/>
    <property type="project" value="MGI"/>
</dbReference>
<dbReference type="GO" id="GO:0031069">
    <property type="term" value="P:hair follicle morphogenesis"/>
    <property type="evidence" value="ECO:0000315"/>
    <property type="project" value="MGI"/>
</dbReference>
<dbReference type="GO" id="GO:0060648">
    <property type="term" value="P:mammary gland bud morphogenesis"/>
    <property type="evidence" value="ECO:0000315"/>
    <property type="project" value="MGI"/>
</dbReference>
<dbReference type="GO" id="GO:0030514">
    <property type="term" value="P:negative regulation of BMP signaling pathway"/>
    <property type="evidence" value="ECO:0000314"/>
    <property type="project" value="MGI"/>
</dbReference>
<dbReference type="GO" id="GO:0090090">
    <property type="term" value="P:negative regulation of canonical Wnt signaling pathway"/>
    <property type="evidence" value="ECO:0000315"/>
    <property type="project" value="MGI"/>
</dbReference>
<dbReference type="GO" id="GO:0010454">
    <property type="term" value="P:negative regulation of cell fate commitment"/>
    <property type="evidence" value="ECO:0000315"/>
    <property type="project" value="MGI"/>
</dbReference>
<dbReference type="GO" id="GO:2000016">
    <property type="term" value="P:negative regulation of determination of dorsal identity"/>
    <property type="evidence" value="ECO:0007669"/>
    <property type="project" value="Ensembl"/>
</dbReference>
<dbReference type="GO" id="GO:0045662">
    <property type="term" value="P:negative regulation of myoblast differentiation"/>
    <property type="evidence" value="ECO:0007669"/>
    <property type="project" value="Ensembl"/>
</dbReference>
<dbReference type="GO" id="GO:0042475">
    <property type="term" value="P:odontogenesis of dentin-containing tooth"/>
    <property type="evidence" value="ECO:0000315"/>
    <property type="project" value="MGI"/>
</dbReference>
<dbReference type="GO" id="GO:0007389">
    <property type="term" value="P:pattern specification process"/>
    <property type="evidence" value="ECO:0000315"/>
    <property type="project" value="MGI"/>
</dbReference>
<dbReference type="FunFam" id="2.10.90.10:FF:000019">
    <property type="entry name" value="Sclerostin domain-containing protein 1"/>
    <property type="match status" value="1"/>
</dbReference>
<dbReference type="Gene3D" id="2.10.90.10">
    <property type="entry name" value="Cystine-knot cytokines"/>
    <property type="match status" value="1"/>
</dbReference>
<dbReference type="InterPro" id="IPR006207">
    <property type="entry name" value="Cys_knot_C"/>
</dbReference>
<dbReference type="InterPro" id="IPR029034">
    <property type="entry name" value="Cystine-knot_cytokine"/>
</dbReference>
<dbReference type="InterPro" id="IPR008835">
    <property type="entry name" value="Sclerostin/SOSTDC1"/>
</dbReference>
<dbReference type="PANTHER" id="PTHR14903:SF5">
    <property type="entry name" value="SCLEROSTIN DOMAIN-CONTAINING PROTEIN 1"/>
    <property type="match status" value="1"/>
</dbReference>
<dbReference type="PANTHER" id="PTHR14903">
    <property type="entry name" value="SCLEROSTIN-RELATED"/>
    <property type="match status" value="1"/>
</dbReference>
<dbReference type="Pfam" id="PF05463">
    <property type="entry name" value="Sclerostin"/>
    <property type="match status" value="1"/>
</dbReference>
<dbReference type="PROSITE" id="PS01225">
    <property type="entry name" value="CTCK_2"/>
    <property type="match status" value="1"/>
</dbReference>
<proteinExistence type="evidence at protein level"/>
<sequence>MLPPAIHLSLIPLLCILMRNCLAFKNDATEILYSHVVKPVPAHPSSNSTLNQARNGGRHFSSTGLDRNSRVQVGCRELRSTKYISDGQCTSISPLKELVCAGECLPLPVLPNWIGGGYGTKYWSRRSSQEWRCVNDKTRTQRIQLQCQDGSTRTYKITVVTACKCKRYTRQHNESSHNFESVSPAKPAQHHRERKRASKSSKHSLS</sequence>
<organism>
    <name type="scientific">Mus musculus</name>
    <name type="common">Mouse</name>
    <dbReference type="NCBI Taxonomy" id="10090"/>
    <lineage>
        <taxon>Eukaryota</taxon>
        <taxon>Metazoa</taxon>
        <taxon>Chordata</taxon>
        <taxon>Craniata</taxon>
        <taxon>Vertebrata</taxon>
        <taxon>Euteleostomi</taxon>
        <taxon>Mammalia</taxon>
        <taxon>Eutheria</taxon>
        <taxon>Euarchontoglires</taxon>
        <taxon>Glires</taxon>
        <taxon>Rodentia</taxon>
        <taxon>Myomorpha</taxon>
        <taxon>Muroidea</taxon>
        <taxon>Muridae</taxon>
        <taxon>Murinae</taxon>
        <taxon>Mus</taxon>
        <taxon>Mus</taxon>
    </lineage>
</organism>
<comment type="function">
    <text evidence="1 6">May be involved in the onset of endometrial receptivity for implantation/sensitization for the decidual cell reaction. Enhances Wnt signaling and inhibits TGF-beta signaling (By similarity). Directly antagonizes activity of BMP2, BMP4, BMP6 and BMP7 in a dose-dependent manner.</text>
</comment>
<comment type="subunit">
    <text evidence="6">Interacts with BMP2, BMP4, BMP6 and BMP7 with high affinity.</text>
</comment>
<comment type="subcellular location">
    <subcellularLocation>
        <location evidence="6">Secreted</location>
    </subcellularLocation>
</comment>
<comment type="tissue specificity">
    <text evidence="6 7">Highly expressed in kidney at renal collecting ducts level and weakly in brain.</text>
</comment>
<comment type="developmental stage">
    <text evidence="5 6 7">Expression was first detected at 11 dpc throughout the surface of the embryo, and it was most intense in the head region on the surfaces of the mandibular, maxillary, and frontonasal processes. At 11.5 dpc expression is detected in the first and second branchial arches, pharynx and metanephros. At 12 dpc-14 dpc, expression was intense and strikingly confined to developing ectodermal organs. The vibrissae, tylotrich hair follicles, tongue papillae, and tooth germs as well as the ear auricle. Also expressed intensely in kidney epithelium in the stalk and tips of ureter as well as in the spermatic ducts in the testis. At 17.5 dpc strong expression was restricted to kidney tubules and ameloblasts in teeth, and moderate expression was observed in hair follicles, choroids plexus of the fourth cerebral ventricle of the brain. First detected on 12.5 dpc in interstitial cell of the testis and increased towards 14.5 dpc. On 8 dpp (day post partum) highly expression was detected in kidney and weakly in skin.</text>
</comment>
<comment type="induction">
    <text evidence="6">Up-regulated by BMP2 and BMP7. Down-regulated by FGF4 and SHH.</text>
</comment>
<comment type="similarity">
    <text evidence="8">Belongs to the sclerostin family.</text>
</comment>
<name>SOSD1_MOUSE</name>